<keyword id="KW-1185">Reference proteome</keyword>
<name>Y1389_METJA</name>
<gene>
    <name type="ordered locus">MJ1389</name>
</gene>
<reference key="1">
    <citation type="journal article" date="1996" name="Science">
        <title>Complete genome sequence of the methanogenic archaeon, Methanococcus jannaschii.</title>
        <authorList>
            <person name="Bult C.J."/>
            <person name="White O."/>
            <person name="Olsen G.J."/>
            <person name="Zhou L."/>
            <person name="Fleischmann R.D."/>
            <person name="Sutton G.G."/>
            <person name="Blake J.A."/>
            <person name="FitzGerald L.M."/>
            <person name="Clayton R.A."/>
            <person name="Gocayne J.D."/>
            <person name="Kerlavage A.R."/>
            <person name="Dougherty B.A."/>
            <person name="Tomb J.-F."/>
            <person name="Adams M.D."/>
            <person name="Reich C.I."/>
            <person name="Overbeek R."/>
            <person name="Kirkness E.F."/>
            <person name="Weinstock K.G."/>
            <person name="Merrick J.M."/>
            <person name="Glodek A."/>
            <person name="Scott J.L."/>
            <person name="Geoghagen N.S.M."/>
            <person name="Weidman J.F."/>
            <person name="Fuhrmann J.L."/>
            <person name="Nguyen D."/>
            <person name="Utterback T.R."/>
            <person name="Kelley J.M."/>
            <person name="Peterson J.D."/>
            <person name="Sadow P.W."/>
            <person name="Hanna M.C."/>
            <person name="Cotton M.D."/>
            <person name="Roberts K.M."/>
            <person name="Hurst M.A."/>
            <person name="Kaine B.P."/>
            <person name="Borodovsky M."/>
            <person name="Klenk H.-P."/>
            <person name="Fraser C.M."/>
            <person name="Smith H.O."/>
            <person name="Woese C.R."/>
            <person name="Venter J.C."/>
        </authorList>
    </citation>
    <scope>NUCLEOTIDE SEQUENCE [LARGE SCALE GENOMIC DNA]</scope>
    <source>
        <strain>ATCC 43067 / DSM 2661 / JAL-1 / JCM 10045 / NBRC 100440</strain>
    </source>
</reference>
<feature type="chain" id="PRO_0000107306" description="Uncharacterized protein MJ1389">
    <location>
        <begin position="1"/>
        <end position="134"/>
    </location>
</feature>
<sequence length="134" mass="15253">MKATENRKVNEINEILLPLSKNLKNVEGFVIVSKDSLVKVGNIDGEDLEIISRHMAVVMGSSEMLYKRFNDEVEYIEIKGKKHKIILYNLDDFIFAVVGNIKADEIKDKVMELKFKVNNIDGLTAENIIEEIAL</sequence>
<protein>
    <recommendedName>
        <fullName>Uncharacterized protein MJ1389</fullName>
    </recommendedName>
</protein>
<dbReference type="EMBL" id="L77117">
    <property type="protein sequence ID" value="AAB99400.1"/>
    <property type="molecule type" value="Genomic_DNA"/>
</dbReference>
<dbReference type="PIR" id="D64473">
    <property type="entry name" value="D64473"/>
</dbReference>
<dbReference type="RefSeq" id="WP_010870906.1">
    <property type="nucleotide sequence ID" value="NC_000909.1"/>
</dbReference>
<dbReference type="SMR" id="Q58784"/>
<dbReference type="STRING" id="243232.MJ_1389"/>
<dbReference type="PaxDb" id="243232-MJ_1389"/>
<dbReference type="EnsemblBacteria" id="AAB99400">
    <property type="protein sequence ID" value="AAB99400"/>
    <property type="gene ID" value="MJ_1389"/>
</dbReference>
<dbReference type="GeneID" id="1452292"/>
<dbReference type="KEGG" id="mja:MJ_1389"/>
<dbReference type="eggNOG" id="arCOG02603">
    <property type="taxonomic scope" value="Archaea"/>
</dbReference>
<dbReference type="HOGENOM" id="CLU_1912376_0_0_2"/>
<dbReference type="InParanoid" id="Q58784"/>
<dbReference type="OrthoDB" id="374568at2157"/>
<dbReference type="Proteomes" id="UP000000805">
    <property type="component" value="Chromosome"/>
</dbReference>
<dbReference type="Gene3D" id="3.30.450.30">
    <property type="entry name" value="Dynein light chain 2a, cytoplasmic"/>
    <property type="match status" value="1"/>
</dbReference>
<dbReference type="InterPro" id="IPR004942">
    <property type="entry name" value="Roadblock/LAMTOR2_dom"/>
</dbReference>
<dbReference type="Pfam" id="PF03259">
    <property type="entry name" value="Robl_LC7"/>
    <property type="match status" value="1"/>
</dbReference>
<dbReference type="SMART" id="SM00960">
    <property type="entry name" value="Robl_LC7"/>
    <property type="match status" value="1"/>
</dbReference>
<dbReference type="SUPFAM" id="SSF103196">
    <property type="entry name" value="Roadblock/LC7 domain"/>
    <property type="match status" value="1"/>
</dbReference>
<accession>Q58784</accession>
<organism>
    <name type="scientific">Methanocaldococcus jannaschii (strain ATCC 43067 / DSM 2661 / JAL-1 / JCM 10045 / NBRC 100440)</name>
    <name type="common">Methanococcus jannaschii</name>
    <dbReference type="NCBI Taxonomy" id="243232"/>
    <lineage>
        <taxon>Archaea</taxon>
        <taxon>Methanobacteriati</taxon>
        <taxon>Methanobacteriota</taxon>
        <taxon>Methanomada group</taxon>
        <taxon>Methanococci</taxon>
        <taxon>Methanococcales</taxon>
        <taxon>Methanocaldococcaceae</taxon>
        <taxon>Methanocaldococcus</taxon>
    </lineage>
</organism>
<proteinExistence type="predicted"/>